<sequence length="641" mass="69251">MSKIIGIDLGTTNSCIALLDGDKPRVIENAEGERTTASVIAYTQDGEILVGQPAKRQAVTNPKNTLFAIKRLLGRRFEDEEVQRDIEIMPFNIVKADNGDAWVEAKGKKMAAPQVSAEVLKKMKKTAEDYLGEEVTGAVITVPAYFNDAQRQATKDAGRIAGLDVKRIINEPTAAALAYGLDKQGGERTIAVYDLGGGTFDISIIEIDEVDGEKTFEVLSTNGDTHLGGEDFDNRMINYLVGEFKKEQGIDLKSDPLAMQRVKEAAEKAKIELSSAQQTDVNLPYVTADAAGPKHMNVKVTRAKLESLVEDLVQRTLEPLKIALTDANLSITDITDVILVGGQTRMPMVQAKVTEFFGKEPRKDVNPDEAVAVGAAIQAGVLAGEVKDVLLLDVTPLSLGIETMGGVMTKLIEKNTTIPTKANQVFSTAEDNQSAVTIHVLQGERKQSSYNKSLGQFNLEGIQAGSRGTAQIDVTFDLDADGILHVSATDKATNKEQKITIQASGGLSNDDIEKMVQEAEANKEADKMFEELVTARNQADQLVHSTRKQVEELGDALPADEKAKIDTAIADVETALKGEDKAAIDNATQALMTASQALVQMAQQQAQAQHAQSSQQTNDTTGQSSTDDDVFEAEFEEVKDK</sequence>
<organism>
    <name type="scientific">Photobacterium profundum (strain SS9)</name>
    <dbReference type="NCBI Taxonomy" id="298386"/>
    <lineage>
        <taxon>Bacteria</taxon>
        <taxon>Pseudomonadati</taxon>
        <taxon>Pseudomonadota</taxon>
        <taxon>Gammaproteobacteria</taxon>
        <taxon>Vibrionales</taxon>
        <taxon>Vibrionaceae</taxon>
        <taxon>Photobacterium</taxon>
    </lineage>
</organism>
<gene>
    <name evidence="1" type="primary">dnaK2</name>
    <name type="ordered locus">PBPRA1484</name>
</gene>
<evidence type="ECO:0000255" key="1">
    <source>
        <dbReference type="HAMAP-Rule" id="MF_00332"/>
    </source>
</evidence>
<evidence type="ECO:0000256" key="2">
    <source>
        <dbReference type="SAM" id="MobiDB-lite"/>
    </source>
</evidence>
<reference key="1">
    <citation type="journal article" date="2005" name="Science">
        <title>Life at depth: Photobacterium profundum genome sequence and expression analysis.</title>
        <authorList>
            <person name="Vezzi A."/>
            <person name="Campanaro S."/>
            <person name="D'Angelo M."/>
            <person name="Simonato F."/>
            <person name="Vitulo N."/>
            <person name="Lauro F.M."/>
            <person name="Cestaro A."/>
            <person name="Malacrida G."/>
            <person name="Simionati B."/>
            <person name="Cannata N."/>
            <person name="Romualdi C."/>
            <person name="Bartlett D.H."/>
            <person name="Valle G."/>
        </authorList>
    </citation>
    <scope>NUCLEOTIDE SEQUENCE [LARGE SCALE GENOMIC DNA]</scope>
    <source>
        <strain>ATCC BAA-1253 / SS9</strain>
    </source>
</reference>
<keyword id="KW-0067">ATP-binding</keyword>
<keyword id="KW-0143">Chaperone</keyword>
<keyword id="KW-0547">Nucleotide-binding</keyword>
<keyword id="KW-0597">Phosphoprotein</keyword>
<keyword id="KW-1185">Reference proteome</keyword>
<keyword id="KW-0346">Stress response</keyword>
<accession>Q6LS31</accession>
<feature type="chain" id="PRO_0000225993" description="Chaperone protein DnaK 2">
    <location>
        <begin position="1"/>
        <end position="641"/>
    </location>
</feature>
<feature type="region of interest" description="Disordered" evidence="2">
    <location>
        <begin position="601"/>
        <end position="641"/>
    </location>
</feature>
<feature type="compositionally biased region" description="Low complexity" evidence="2">
    <location>
        <begin position="601"/>
        <end position="616"/>
    </location>
</feature>
<feature type="compositionally biased region" description="Acidic residues" evidence="2">
    <location>
        <begin position="626"/>
        <end position="635"/>
    </location>
</feature>
<feature type="modified residue" description="Phosphothreonine; by autocatalysis" evidence="1">
    <location>
        <position position="199"/>
    </location>
</feature>
<comment type="function">
    <text evidence="1">Acts as a chaperone.</text>
</comment>
<comment type="induction">
    <text evidence="1">By stress conditions e.g. heat shock.</text>
</comment>
<comment type="similarity">
    <text evidence="1">Belongs to the heat shock protein 70 family.</text>
</comment>
<protein>
    <recommendedName>
        <fullName evidence="1">Chaperone protein DnaK 2</fullName>
    </recommendedName>
    <alternativeName>
        <fullName evidence="1">HSP70 2</fullName>
    </alternativeName>
    <alternativeName>
        <fullName evidence="1">Heat shock 70 kDa protein 2</fullName>
    </alternativeName>
    <alternativeName>
        <fullName evidence="1">Heat shock protein 70 2</fullName>
    </alternativeName>
</protein>
<proteinExistence type="inferred from homology"/>
<dbReference type="EMBL" id="CR378667">
    <property type="protein sequence ID" value="CAG19895.1"/>
    <property type="molecule type" value="Genomic_DNA"/>
</dbReference>
<dbReference type="RefSeq" id="WP_011218217.1">
    <property type="nucleotide sequence ID" value="NC_006370.1"/>
</dbReference>
<dbReference type="SMR" id="Q6LS31"/>
<dbReference type="STRING" id="298386.PBPRA1484"/>
<dbReference type="KEGG" id="ppr:PBPRA1484"/>
<dbReference type="eggNOG" id="COG0443">
    <property type="taxonomic scope" value="Bacteria"/>
</dbReference>
<dbReference type="HOGENOM" id="CLU_005965_2_1_6"/>
<dbReference type="Proteomes" id="UP000000593">
    <property type="component" value="Chromosome 1"/>
</dbReference>
<dbReference type="GO" id="GO:0005524">
    <property type="term" value="F:ATP binding"/>
    <property type="evidence" value="ECO:0007669"/>
    <property type="project" value="UniProtKB-UniRule"/>
</dbReference>
<dbReference type="GO" id="GO:0140662">
    <property type="term" value="F:ATP-dependent protein folding chaperone"/>
    <property type="evidence" value="ECO:0007669"/>
    <property type="project" value="InterPro"/>
</dbReference>
<dbReference type="GO" id="GO:0051082">
    <property type="term" value="F:unfolded protein binding"/>
    <property type="evidence" value="ECO:0007669"/>
    <property type="project" value="InterPro"/>
</dbReference>
<dbReference type="CDD" id="cd10234">
    <property type="entry name" value="ASKHA_NBD_HSP70_DnaK-like"/>
    <property type="match status" value="1"/>
</dbReference>
<dbReference type="FunFam" id="2.60.34.10:FF:000014">
    <property type="entry name" value="Chaperone protein DnaK HSP70"/>
    <property type="match status" value="1"/>
</dbReference>
<dbReference type="FunFam" id="3.30.30.30:FF:000003">
    <property type="entry name" value="Heat shock protein 9"/>
    <property type="match status" value="1"/>
</dbReference>
<dbReference type="FunFam" id="1.20.1270.10:FF:000001">
    <property type="entry name" value="Molecular chaperone DnaK"/>
    <property type="match status" value="1"/>
</dbReference>
<dbReference type="FunFam" id="3.30.420.40:FF:000004">
    <property type="entry name" value="Molecular chaperone DnaK"/>
    <property type="match status" value="1"/>
</dbReference>
<dbReference type="FunFam" id="3.90.640.10:FF:000003">
    <property type="entry name" value="Molecular chaperone DnaK"/>
    <property type="match status" value="1"/>
</dbReference>
<dbReference type="Gene3D" id="1.20.1270.10">
    <property type="match status" value="1"/>
</dbReference>
<dbReference type="Gene3D" id="3.30.420.40">
    <property type="match status" value="2"/>
</dbReference>
<dbReference type="Gene3D" id="3.90.640.10">
    <property type="entry name" value="Actin, Chain A, domain 4"/>
    <property type="match status" value="1"/>
</dbReference>
<dbReference type="Gene3D" id="2.60.34.10">
    <property type="entry name" value="Substrate Binding Domain Of DNAk, Chain A, domain 1"/>
    <property type="match status" value="1"/>
</dbReference>
<dbReference type="HAMAP" id="MF_00332">
    <property type="entry name" value="DnaK"/>
    <property type="match status" value="1"/>
</dbReference>
<dbReference type="InterPro" id="IPR043129">
    <property type="entry name" value="ATPase_NBD"/>
</dbReference>
<dbReference type="InterPro" id="IPR012725">
    <property type="entry name" value="Chaperone_DnaK"/>
</dbReference>
<dbReference type="InterPro" id="IPR018181">
    <property type="entry name" value="Heat_shock_70_CS"/>
</dbReference>
<dbReference type="InterPro" id="IPR029048">
    <property type="entry name" value="HSP70_C_sf"/>
</dbReference>
<dbReference type="InterPro" id="IPR029047">
    <property type="entry name" value="HSP70_peptide-bd_sf"/>
</dbReference>
<dbReference type="InterPro" id="IPR013126">
    <property type="entry name" value="Hsp_70_fam"/>
</dbReference>
<dbReference type="NCBIfam" id="NF001413">
    <property type="entry name" value="PRK00290.1"/>
    <property type="match status" value="1"/>
</dbReference>
<dbReference type="NCBIfam" id="TIGR02350">
    <property type="entry name" value="prok_dnaK"/>
    <property type="match status" value="1"/>
</dbReference>
<dbReference type="PANTHER" id="PTHR19375">
    <property type="entry name" value="HEAT SHOCK PROTEIN 70KDA"/>
    <property type="match status" value="1"/>
</dbReference>
<dbReference type="Pfam" id="PF00012">
    <property type="entry name" value="HSP70"/>
    <property type="match status" value="1"/>
</dbReference>
<dbReference type="PRINTS" id="PR00301">
    <property type="entry name" value="HEATSHOCK70"/>
</dbReference>
<dbReference type="SUPFAM" id="SSF53067">
    <property type="entry name" value="Actin-like ATPase domain"/>
    <property type="match status" value="2"/>
</dbReference>
<dbReference type="SUPFAM" id="SSF100920">
    <property type="entry name" value="Heat shock protein 70kD (HSP70), peptide-binding domain"/>
    <property type="match status" value="1"/>
</dbReference>
<dbReference type="PROSITE" id="PS00297">
    <property type="entry name" value="HSP70_1"/>
    <property type="match status" value="1"/>
</dbReference>
<dbReference type="PROSITE" id="PS00329">
    <property type="entry name" value="HSP70_2"/>
    <property type="match status" value="1"/>
</dbReference>
<dbReference type="PROSITE" id="PS01036">
    <property type="entry name" value="HSP70_3"/>
    <property type="match status" value="1"/>
</dbReference>
<name>DNAK2_PHOPR</name>